<organism>
    <name type="scientific">Caenorhabditis elegans</name>
    <dbReference type="NCBI Taxonomy" id="6239"/>
    <lineage>
        <taxon>Eukaryota</taxon>
        <taxon>Metazoa</taxon>
        <taxon>Ecdysozoa</taxon>
        <taxon>Nematoda</taxon>
        <taxon>Chromadorea</taxon>
        <taxon>Rhabditida</taxon>
        <taxon>Rhabditina</taxon>
        <taxon>Rhabditomorpha</taxon>
        <taxon>Rhabditoidea</taxon>
        <taxon>Rhabditidae</taxon>
        <taxon>Peloderinae</taxon>
        <taxon>Caenorhabditis</taxon>
    </lineage>
</organism>
<keyword id="KW-0597">Phosphoprotein</keyword>
<keyword id="KW-1185">Reference proteome</keyword>
<keyword id="KW-0677">Repeat</keyword>
<keyword id="KW-0734">Signal transduction inhibitor</keyword>
<protein>
    <recommendedName>
        <fullName>Regulator of G-protein signaling rgs-3</fullName>
    </recommendedName>
</protein>
<feature type="chain" id="PRO_0000204239" description="Regulator of G-protein signaling rgs-3">
    <location>
        <begin position="1"/>
        <end position="363"/>
    </location>
</feature>
<feature type="domain" description="RGS 1" evidence="1">
    <location>
        <begin position="112"/>
        <end position="225"/>
    </location>
</feature>
<feature type="domain" description="RGS 2" evidence="1">
    <location>
        <begin position="240"/>
        <end position="359"/>
    </location>
</feature>
<feature type="region of interest" description="Disordered" evidence="2">
    <location>
        <begin position="1"/>
        <end position="70"/>
    </location>
</feature>
<feature type="compositionally biased region" description="Basic and acidic residues" evidence="2">
    <location>
        <begin position="21"/>
        <end position="35"/>
    </location>
</feature>
<feature type="compositionally biased region" description="Low complexity" evidence="2">
    <location>
        <begin position="36"/>
        <end position="50"/>
    </location>
</feature>
<feature type="compositionally biased region" description="Low complexity" evidence="2">
    <location>
        <begin position="58"/>
        <end position="70"/>
    </location>
</feature>
<feature type="mutagenesis site" description="Hypersensitivity to quinine which may be due to loss of phosphorylation at this site." evidence="4">
    <original>S</original>
    <variation>A</variation>
    <location>
        <position position="154"/>
    </location>
</feature>
<accession>Q18312</accession>
<name>RGS3_CAEEL</name>
<proteinExistence type="evidence at protein level"/>
<comment type="function">
    <text evidence="3 4">Modulates chemotaxis responses by regulating positively the sensitivity to CO2 levels in BAG neurons and by regulating negatively the sensitivity to quinine in ASH sensory neurons.</text>
</comment>
<comment type="PTM">
    <text evidence="4">May be phosphorylated and activated by egl-4.</text>
</comment>
<comment type="disruption phenotype">
    <text evidence="4">RNAi-mediated knockdown in ASH sensory neurons results in hypersensitivity to dilute quinine.</text>
</comment>
<reference key="1">
    <citation type="journal article" date="1998" name="Science">
        <title>Genome sequence of the nematode C. elegans: a platform for investigating biology.</title>
        <authorList>
            <consortium name="The C. elegans sequencing consortium"/>
        </authorList>
    </citation>
    <scope>NUCLEOTIDE SEQUENCE [LARGE SCALE GENOMIC DNA]</scope>
    <source>
        <strain>Bristol N2</strain>
    </source>
</reference>
<reference key="2">
    <citation type="journal article" date="2000" name="Genes Dev.">
        <title>Multiple RGS proteins alter neural G protein signaling to allow C. elegans to rapidly change behavior when fed.</title>
        <authorList>
            <person name="Dong M.-Q."/>
            <person name="Chase D."/>
            <person name="Patikoglou G.A."/>
            <person name="Koelle M.R."/>
        </authorList>
    </citation>
    <scope>GENE NAME</scope>
</reference>
<reference key="3">
    <citation type="journal article" date="2011" name="Proc. Natl. Acad. Sci. U.S.A.">
        <title>Receptor-type guanylate cyclase is required for carbon dioxide sensation by Caenorhabditis elegans.</title>
        <authorList>
            <person name="Hallem E.A."/>
            <person name="Spencer W.C."/>
            <person name="McWhirter R.D."/>
            <person name="Zeller G."/>
            <person name="Henz S.R."/>
            <person name="Ratsch G."/>
            <person name="Miller D.M."/>
            <person name="Horvitz H.R."/>
            <person name="Sternberg P.W."/>
            <person name="Ringstad N."/>
        </authorList>
    </citation>
    <scope>FUNCTION</scope>
</reference>
<reference key="4">
    <citation type="journal article" date="2013" name="PLoS Genet.">
        <title>The C. elegans cGMP-dependent protein kinase EGL-4 regulates nociceptive behavioral sensitivity.</title>
        <authorList>
            <person name="Krzyzanowski M.C."/>
            <person name="Brueggemann C."/>
            <person name="Ezak M.J."/>
            <person name="Wood J.F."/>
            <person name="Michaels K.L."/>
            <person name="Jackson C.A."/>
            <person name="Juang B.T."/>
            <person name="Collins K.D."/>
            <person name="Yu M.C."/>
            <person name="L'etoile N.D."/>
            <person name="Ferkey D.M."/>
        </authorList>
    </citation>
    <scope>FUNCTION</scope>
    <scope>PHOSPHORYLATION</scope>
    <scope>DISRUPTION PHENOTYPE</scope>
    <scope>MUTAGENESIS OF SER-154</scope>
</reference>
<dbReference type="EMBL" id="FO080715">
    <property type="protein sequence ID" value="CCD66106.1"/>
    <property type="molecule type" value="Genomic_DNA"/>
</dbReference>
<dbReference type="PIR" id="T15700">
    <property type="entry name" value="T15700"/>
</dbReference>
<dbReference type="RefSeq" id="NP_495223.1">
    <property type="nucleotide sequence ID" value="NM_062822.4"/>
</dbReference>
<dbReference type="SMR" id="Q18312"/>
<dbReference type="STRING" id="6239.C29H12.3a.1"/>
<dbReference type="PaxDb" id="6239-C29H12.3a"/>
<dbReference type="PeptideAtlas" id="Q18312"/>
<dbReference type="EnsemblMetazoa" id="C29H12.3a.1">
    <property type="protein sequence ID" value="C29H12.3a.1"/>
    <property type="gene ID" value="WBGene00004346"/>
</dbReference>
<dbReference type="EnsemblMetazoa" id="C29H12.3a.2">
    <property type="protein sequence ID" value="C29H12.3a.2"/>
    <property type="gene ID" value="WBGene00004346"/>
</dbReference>
<dbReference type="GeneID" id="174020"/>
<dbReference type="KEGG" id="cel:CELE_C29H12.3"/>
<dbReference type="UCSC" id="C29H12.3a">
    <property type="organism name" value="c. elegans"/>
</dbReference>
<dbReference type="AGR" id="WB:WBGene00004346"/>
<dbReference type="CTD" id="174020"/>
<dbReference type="WormBase" id="C29H12.3a">
    <property type="protein sequence ID" value="CE29201"/>
    <property type="gene ID" value="WBGene00004346"/>
    <property type="gene designation" value="rgs-3"/>
</dbReference>
<dbReference type="eggNOG" id="KOG3589">
    <property type="taxonomic scope" value="Eukaryota"/>
</dbReference>
<dbReference type="InParanoid" id="Q18312"/>
<dbReference type="OMA" id="MEEFAPA"/>
<dbReference type="OrthoDB" id="196547at2759"/>
<dbReference type="Reactome" id="R-CEL-416476">
    <property type="pathway name" value="G alpha (q) signalling events"/>
</dbReference>
<dbReference type="Reactome" id="R-CEL-418594">
    <property type="pathway name" value="G alpha (i) signalling events"/>
</dbReference>
<dbReference type="Reactome" id="R-CEL-418597">
    <property type="pathway name" value="G alpha (z) signalling events"/>
</dbReference>
<dbReference type="PRO" id="PR:Q18312"/>
<dbReference type="Proteomes" id="UP000001940">
    <property type="component" value="Chromosome II"/>
</dbReference>
<dbReference type="Bgee" id="WBGene00004346">
    <property type="expression patterns" value="Expressed in pharyngeal muscle cell (C elegans) and 3 other cell types or tissues"/>
</dbReference>
<dbReference type="ExpressionAtlas" id="Q18312">
    <property type="expression patterns" value="baseline and differential"/>
</dbReference>
<dbReference type="GO" id="GO:0007635">
    <property type="term" value="P:chemosensory behavior"/>
    <property type="evidence" value="ECO:0000315"/>
    <property type="project" value="UniProtKB"/>
</dbReference>
<dbReference type="GO" id="GO:0009968">
    <property type="term" value="P:negative regulation of signal transduction"/>
    <property type="evidence" value="ECO:0007669"/>
    <property type="project" value="UniProtKB-KW"/>
</dbReference>
<dbReference type="GO" id="GO:0050913">
    <property type="term" value="P:sensory perception of bitter taste"/>
    <property type="evidence" value="ECO:0000315"/>
    <property type="project" value="UniProtKB"/>
</dbReference>
<dbReference type="CDD" id="cd07440">
    <property type="entry name" value="RGS"/>
    <property type="match status" value="2"/>
</dbReference>
<dbReference type="FunFam" id="1.10.167.10:FF:000036">
    <property type="entry name" value="Regulator of G-protein signaling rgs-3"/>
    <property type="match status" value="1"/>
</dbReference>
<dbReference type="Gene3D" id="1.10.167.10">
    <property type="entry name" value="Regulator of G-protein Signalling 4, domain 2"/>
    <property type="match status" value="2"/>
</dbReference>
<dbReference type="InterPro" id="IPR016137">
    <property type="entry name" value="RGS"/>
</dbReference>
<dbReference type="InterPro" id="IPR036305">
    <property type="entry name" value="RGS_sf"/>
</dbReference>
<dbReference type="InterPro" id="IPR044926">
    <property type="entry name" value="RGS_subdomain_2"/>
</dbReference>
<dbReference type="PANTHER" id="PTHR10845:SF192">
    <property type="entry name" value="DOUBLE HIT, ISOFORM B"/>
    <property type="match status" value="1"/>
</dbReference>
<dbReference type="PANTHER" id="PTHR10845">
    <property type="entry name" value="REGULATOR OF G PROTEIN SIGNALING"/>
    <property type="match status" value="1"/>
</dbReference>
<dbReference type="Pfam" id="PF00615">
    <property type="entry name" value="RGS"/>
    <property type="match status" value="2"/>
</dbReference>
<dbReference type="PRINTS" id="PR01301">
    <property type="entry name" value="RGSPROTEIN"/>
</dbReference>
<dbReference type="SMART" id="SM00315">
    <property type="entry name" value="RGS"/>
    <property type="match status" value="2"/>
</dbReference>
<dbReference type="SUPFAM" id="SSF48097">
    <property type="entry name" value="Regulator of G-protein signaling, RGS"/>
    <property type="match status" value="2"/>
</dbReference>
<dbReference type="PROSITE" id="PS50132">
    <property type="entry name" value="RGS"/>
    <property type="match status" value="2"/>
</dbReference>
<evidence type="ECO:0000255" key="1">
    <source>
        <dbReference type="PROSITE-ProRule" id="PRU00171"/>
    </source>
</evidence>
<evidence type="ECO:0000256" key="2">
    <source>
        <dbReference type="SAM" id="MobiDB-lite"/>
    </source>
</evidence>
<evidence type="ECO:0000269" key="3">
    <source>
    </source>
</evidence>
<evidence type="ECO:0000269" key="4">
    <source>
    </source>
</evidence>
<gene>
    <name type="primary">rgs-3</name>
    <name type="ORF">C29H12.3</name>
</gene>
<sequence>MWRSYKAETPELADETQEVDLNLHDSSESDHEGRQSRSASITSSTSAPASNDVTLQVPITNSSATSPTPSTGSMYFIAGMFDGKEKVNREQPPMPTTDGVEYPRAASWAAGNCANVLNDDKGKQLFRVFLFQSLAEENLAFLEAMEKLKKMKISDEKVAYAKEILETYQGSINLSSSSMKSLRNAVASETLDMEEFAPAIKEVRRLLENDQFPRFRRSELYLEYLEELLPRSYAEKWAQSFEGLLGNHVGRHHFRIFLRSIHAEENLRFWEAVVEFRSSRHKANAMNNLGKVILSTYLAEGTTNEVFLPFGVRQVIERRIQDNQIDITLFDEAIKHVEQVLRNDPYVRFLQSSQYIDLLSKLK</sequence>